<evidence type="ECO:0000250" key="1"/>
<evidence type="ECO:0000305" key="2"/>
<accession>P9WG24</accession>
<accession>L0T9N4</accession>
<accession>O06811</accession>
<dbReference type="EC" id="2.2.1.1"/>
<dbReference type="EMBL" id="AE000516">
    <property type="protein sequence ID" value="AAK45759.1"/>
    <property type="status" value="ALT_INIT"/>
    <property type="molecule type" value="Genomic_DNA"/>
</dbReference>
<dbReference type="PIR" id="D70917">
    <property type="entry name" value="D70917"/>
</dbReference>
<dbReference type="RefSeq" id="WP_003407451.1">
    <property type="nucleotide sequence ID" value="NZ_KK341227.1"/>
</dbReference>
<dbReference type="SMR" id="P9WG24"/>
<dbReference type="KEGG" id="mtc:MT1496"/>
<dbReference type="PATRIC" id="fig|83331.31.peg.1608"/>
<dbReference type="HOGENOM" id="CLU_009227_0_0_11"/>
<dbReference type="Proteomes" id="UP000001020">
    <property type="component" value="Chromosome"/>
</dbReference>
<dbReference type="GO" id="GO:0005829">
    <property type="term" value="C:cytosol"/>
    <property type="evidence" value="ECO:0007669"/>
    <property type="project" value="TreeGrafter"/>
</dbReference>
<dbReference type="GO" id="GO:0000287">
    <property type="term" value="F:magnesium ion binding"/>
    <property type="evidence" value="ECO:0007669"/>
    <property type="project" value="UniProtKB-ARBA"/>
</dbReference>
<dbReference type="GO" id="GO:0004802">
    <property type="term" value="F:transketolase activity"/>
    <property type="evidence" value="ECO:0007669"/>
    <property type="project" value="UniProtKB-EC"/>
</dbReference>
<dbReference type="GO" id="GO:0006098">
    <property type="term" value="P:pentose-phosphate shunt"/>
    <property type="evidence" value="ECO:0007669"/>
    <property type="project" value="TreeGrafter"/>
</dbReference>
<dbReference type="CDD" id="cd07033">
    <property type="entry name" value="TPP_PYR_DXS_TK_like"/>
    <property type="match status" value="1"/>
</dbReference>
<dbReference type="CDD" id="cd02012">
    <property type="entry name" value="TPP_TK"/>
    <property type="match status" value="1"/>
</dbReference>
<dbReference type="FunFam" id="3.40.50.920:FF:000003">
    <property type="entry name" value="Transketolase"/>
    <property type="match status" value="1"/>
</dbReference>
<dbReference type="FunFam" id="3.40.50.970:FF:000003">
    <property type="entry name" value="Transketolase"/>
    <property type="match status" value="1"/>
</dbReference>
<dbReference type="FunFam" id="3.40.50.970:FF:000004">
    <property type="entry name" value="Transketolase"/>
    <property type="match status" value="1"/>
</dbReference>
<dbReference type="Gene3D" id="3.40.50.920">
    <property type="match status" value="1"/>
</dbReference>
<dbReference type="Gene3D" id="3.40.50.970">
    <property type="match status" value="2"/>
</dbReference>
<dbReference type="InterPro" id="IPR029061">
    <property type="entry name" value="THDP-binding"/>
</dbReference>
<dbReference type="InterPro" id="IPR009014">
    <property type="entry name" value="Transketo_C/PFOR_II"/>
</dbReference>
<dbReference type="InterPro" id="IPR055152">
    <property type="entry name" value="Transketolase-like_C_2"/>
</dbReference>
<dbReference type="InterPro" id="IPR005475">
    <property type="entry name" value="Transketolase-like_Pyr-bd"/>
</dbReference>
<dbReference type="InterPro" id="IPR005478">
    <property type="entry name" value="Transketolase_bac-like"/>
</dbReference>
<dbReference type="InterPro" id="IPR020826">
    <property type="entry name" value="Transketolase_BS"/>
</dbReference>
<dbReference type="InterPro" id="IPR049557">
    <property type="entry name" value="Transketolase_CS"/>
</dbReference>
<dbReference type="InterPro" id="IPR033247">
    <property type="entry name" value="Transketolase_fam"/>
</dbReference>
<dbReference type="InterPro" id="IPR005474">
    <property type="entry name" value="Transketolase_N"/>
</dbReference>
<dbReference type="NCBIfam" id="TIGR00232">
    <property type="entry name" value="tktlase_bact"/>
    <property type="match status" value="1"/>
</dbReference>
<dbReference type="PANTHER" id="PTHR43522">
    <property type="entry name" value="TRANSKETOLASE"/>
    <property type="match status" value="1"/>
</dbReference>
<dbReference type="PANTHER" id="PTHR43522:SF2">
    <property type="entry name" value="TRANSKETOLASE 1-RELATED"/>
    <property type="match status" value="1"/>
</dbReference>
<dbReference type="Pfam" id="PF02779">
    <property type="entry name" value="Transket_pyr"/>
    <property type="match status" value="1"/>
</dbReference>
<dbReference type="Pfam" id="PF22613">
    <property type="entry name" value="Transketolase_C_1"/>
    <property type="match status" value="1"/>
</dbReference>
<dbReference type="Pfam" id="PF00456">
    <property type="entry name" value="Transketolase_N"/>
    <property type="match status" value="1"/>
</dbReference>
<dbReference type="SMART" id="SM00861">
    <property type="entry name" value="Transket_pyr"/>
    <property type="match status" value="1"/>
</dbReference>
<dbReference type="SUPFAM" id="SSF52518">
    <property type="entry name" value="Thiamin diphosphate-binding fold (THDP-binding)"/>
    <property type="match status" value="2"/>
</dbReference>
<dbReference type="SUPFAM" id="SSF52922">
    <property type="entry name" value="TK C-terminal domain-like"/>
    <property type="match status" value="1"/>
</dbReference>
<dbReference type="PROSITE" id="PS00801">
    <property type="entry name" value="TRANSKETOLASE_1"/>
    <property type="match status" value="1"/>
</dbReference>
<dbReference type="PROSITE" id="PS00802">
    <property type="entry name" value="TRANSKETOLASE_2"/>
    <property type="match status" value="1"/>
</dbReference>
<gene>
    <name type="primary">tkt</name>
    <name type="ordered locus">MT1496</name>
</gene>
<comment type="function">
    <text evidence="1">Catalyzes the reversible transfer of a two-carbon ketol group from sedoheptulose-7-phosphate to glyceraldehyde-3-phosphate, producing xylulose-5-phosphate and ribose-5-phosphate. Catalyzes the transfer of a two-carbon ketol group from a ketose donor to an aldose acceptor, via a covalent intermediate with the cofactor thiamine pyrophosphate (By similarity).</text>
</comment>
<comment type="catalytic activity">
    <reaction>
        <text>D-sedoheptulose 7-phosphate + D-glyceraldehyde 3-phosphate = aldehydo-D-ribose 5-phosphate + D-xylulose 5-phosphate</text>
        <dbReference type="Rhea" id="RHEA:10508"/>
        <dbReference type="ChEBI" id="CHEBI:57483"/>
        <dbReference type="ChEBI" id="CHEBI:57737"/>
        <dbReference type="ChEBI" id="CHEBI:58273"/>
        <dbReference type="ChEBI" id="CHEBI:59776"/>
        <dbReference type="EC" id="2.2.1.1"/>
    </reaction>
</comment>
<comment type="cofactor">
    <cofactor evidence="1">
        <name>Mg(2+)</name>
        <dbReference type="ChEBI" id="CHEBI:18420"/>
    </cofactor>
    <text evidence="1">Binds 1 Mg(2+) ion per subunit.</text>
</comment>
<comment type="cofactor">
    <cofactor evidence="1">
        <name>thiamine diphosphate</name>
        <dbReference type="ChEBI" id="CHEBI:58937"/>
    </cofactor>
    <text evidence="1">Binds 1 thiamine pyrophosphate per subunit.</text>
</comment>
<comment type="subunit">
    <text evidence="1">Homodimer.</text>
</comment>
<comment type="similarity">
    <text evidence="2">Belongs to the transketolase family.</text>
</comment>
<comment type="sequence caution" evidence="2">
    <conflict type="erroneous initiation">
        <sequence resource="EMBL-CDS" id="AAK45759"/>
    </conflict>
</comment>
<protein>
    <recommendedName>
        <fullName>Transketolase</fullName>
        <shortName>TK</shortName>
        <ecNumber>2.2.1.1</ecNumber>
    </recommendedName>
</protein>
<keyword id="KW-0106">Calcium</keyword>
<keyword id="KW-0460">Magnesium</keyword>
<keyword id="KW-0479">Metal-binding</keyword>
<keyword id="KW-1185">Reference proteome</keyword>
<keyword id="KW-0786">Thiamine pyrophosphate</keyword>
<keyword id="KW-0808">Transferase</keyword>
<feature type="chain" id="PRO_0000428436" description="Transketolase">
    <location>
        <begin position="1"/>
        <end position="700"/>
    </location>
</feature>
<feature type="active site" description="Proton donor" evidence="1">
    <location>
        <position position="441"/>
    </location>
</feature>
<feature type="binding site" evidence="1">
    <location>
        <position position="45"/>
    </location>
    <ligand>
        <name>substrate</name>
    </ligand>
</feature>
<feature type="binding site" evidence="1">
    <location>
        <position position="48"/>
    </location>
    <ligand>
        <name>thiamine diphosphate</name>
        <dbReference type="ChEBI" id="CHEBI:58937"/>
    </ligand>
</feature>
<feature type="binding site" evidence="1">
    <location>
        <position position="85"/>
    </location>
    <ligand>
        <name>thiamine diphosphate</name>
        <dbReference type="ChEBI" id="CHEBI:58937"/>
    </ligand>
</feature>
<feature type="binding site" evidence="1">
    <location>
        <begin position="133"/>
        <end position="135"/>
    </location>
    <ligand>
        <name>thiamine diphosphate</name>
        <dbReference type="ChEBI" id="CHEBI:58937"/>
    </ligand>
</feature>
<feature type="binding site" evidence="1">
    <location>
        <position position="135"/>
    </location>
    <ligand>
        <name>thiamine diphosphate</name>
        <dbReference type="ChEBI" id="CHEBI:58937"/>
    </ligand>
</feature>
<feature type="binding site" evidence="1">
    <location>
        <position position="177"/>
    </location>
    <ligand>
        <name>Mg(2+)</name>
        <dbReference type="ChEBI" id="CHEBI:18420"/>
    </ligand>
</feature>
<feature type="binding site" evidence="1">
    <location>
        <position position="178"/>
    </location>
    <ligand>
        <name>thiamine diphosphate</name>
        <dbReference type="ChEBI" id="CHEBI:58937"/>
    </ligand>
</feature>
<feature type="binding site" evidence="1">
    <location>
        <position position="207"/>
    </location>
    <ligand>
        <name>Mg(2+)</name>
        <dbReference type="ChEBI" id="CHEBI:18420"/>
    </ligand>
</feature>
<feature type="binding site" evidence="1">
    <location>
        <position position="207"/>
    </location>
    <ligand>
        <name>thiamine diphosphate</name>
        <dbReference type="ChEBI" id="CHEBI:58937"/>
    </ligand>
</feature>
<feature type="binding site" evidence="1">
    <location>
        <position position="209"/>
    </location>
    <ligand>
        <name>Mg(2+)</name>
        <dbReference type="ChEBI" id="CHEBI:18420"/>
    </ligand>
</feature>
<feature type="binding site" evidence="1">
    <location>
        <position position="283"/>
    </location>
    <ligand>
        <name>substrate</name>
    </ligand>
</feature>
<feature type="binding site" evidence="1">
    <location>
        <position position="283"/>
    </location>
    <ligand>
        <name>thiamine diphosphate</name>
        <dbReference type="ChEBI" id="CHEBI:58937"/>
    </ligand>
</feature>
<feature type="binding site" evidence="1">
    <location>
        <position position="378"/>
    </location>
    <ligand>
        <name>substrate</name>
    </ligand>
</feature>
<feature type="binding site" evidence="1">
    <location>
        <position position="405"/>
    </location>
    <ligand>
        <name>substrate</name>
    </ligand>
</feature>
<feature type="binding site" evidence="1">
    <location>
        <position position="467"/>
    </location>
    <ligand>
        <name>thiamine diphosphate</name>
        <dbReference type="ChEBI" id="CHEBI:58937"/>
    </ligand>
</feature>
<feature type="binding site" evidence="1">
    <location>
        <position position="491"/>
    </location>
    <ligand>
        <name>substrate</name>
    </ligand>
</feature>
<feature type="binding site" evidence="1">
    <location>
        <position position="499"/>
    </location>
    <ligand>
        <name>substrate</name>
    </ligand>
</feature>
<feature type="binding site" evidence="1">
    <location>
        <position position="552"/>
    </location>
    <ligand>
        <name>substrate</name>
    </ligand>
</feature>
<feature type="site" description="Important for catalytic activity" evidence="1">
    <location>
        <position position="45"/>
    </location>
</feature>
<feature type="site" description="Important for catalytic activity" evidence="1">
    <location>
        <position position="283"/>
    </location>
</feature>
<name>TKT_MYCTO</name>
<sequence length="700" mass="75541">MTTLEEISALTRPRHPDDWTEIDSAAVDTIRVLAADAVQKVGNGHPGTAMSLAPLAYTLFQRTMRHDPSDTHWLGRDRFVLSAGHSSLTLYIQLYLGGFGLELSDIESLRTWGSKTPGHPEFRHTPGVEITTGPLGQGLASAVGMAMASRYERGLFDPDAEPGASPFDHYIYVIASDGDIEEGVTSEASSLAAVQQLGNLIVFYDRNQISIEDDTNIALCEDTAARYRAYGWHVQEVEGGENVVGIEEAIANAQAVTDRPSFIALRTVIGYPAPNLMDTGKAHGAALGDDEVAAVKKIVGFDPDKTFQVREDVLTHTRGLVARGKQAHERWQLEFDAWARREPERKALLDRLLAQKLPDGWDADLPHWEPGSKALATRAASGAVLSALGPKLPELWGGSADLAGSNNTTIKGADSFGPPSISTKEYTAHWYGRTLHFGVREHAMGAILSGIVLHGPTRAYGGTFLQFSDYMRPAVRLAALMDIDTIYVWTHDSIGLGEDGPTHQPIEHLSALRAIPRLSVVRPADANETAYAWRTILARRNGSGPVGLILTRQGVPVLDGTDAEGVARGGYVLSDAGGLQPGEEPDVILIATGSEVQLAVAAQTLLADNDILARVVSMPCLEWFEAQPYEYRDAVLPPTVSARVAVEAGVAQCWHQLVGDTGEIVSIEHYGESADHKTLFREYGFTAEAVAAAAERALDN</sequence>
<reference key="1">
    <citation type="journal article" date="2002" name="J. Bacteriol.">
        <title>Whole-genome comparison of Mycobacterium tuberculosis clinical and laboratory strains.</title>
        <authorList>
            <person name="Fleischmann R.D."/>
            <person name="Alland D."/>
            <person name="Eisen J.A."/>
            <person name="Carpenter L."/>
            <person name="White O."/>
            <person name="Peterson J.D."/>
            <person name="DeBoy R.T."/>
            <person name="Dodson R.J."/>
            <person name="Gwinn M.L."/>
            <person name="Haft D.H."/>
            <person name="Hickey E.K."/>
            <person name="Kolonay J.F."/>
            <person name="Nelson W.C."/>
            <person name="Umayam L.A."/>
            <person name="Ermolaeva M.D."/>
            <person name="Salzberg S.L."/>
            <person name="Delcher A."/>
            <person name="Utterback T.R."/>
            <person name="Weidman J.F."/>
            <person name="Khouri H.M."/>
            <person name="Gill J."/>
            <person name="Mikula A."/>
            <person name="Bishai W."/>
            <person name="Jacobs W.R. Jr."/>
            <person name="Venter J.C."/>
            <person name="Fraser C.M."/>
        </authorList>
    </citation>
    <scope>NUCLEOTIDE SEQUENCE [LARGE SCALE GENOMIC DNA]</scope>
    <source>
        <strain>CDC 1551 / Oshkosh</strain>
    </source>
</reference>
<proteinExistence type="inferred from homology"/>
<organism>
    <name type="scientific">Mycobacterium tuberculosis (strain CDC 1551 / Oshkosh)</name>
    <dbReference type="NCBI Taxonomy" id="83331"/>
    <lineage>
        <taxon>Bacteria</taxon>
        <taxon>Bacillati</taxon>
        <taxon>Actinomycetota</taxon>
        <taxon>Actinomycetes</taxon>
        <taxon>Mycobacteriales</taxon>
        <taxon>Mycobacteriaceae</taxon>
        <taxon>Mycobacterium</taxon>
        <taxon>Mycobacterium tuberculosis complex</taxon>
    </lineage>
</organism>